<feature type="chain" id="PRO_1000075389" description="S-adenosylmethionine synthase">
    <location>
        <begin position="1"/>
        <end position="399"/>
    </location>
</feature>
<feature type="region of interest" description="Flexible loop" evidence="1">
    <location>
        <begin position="99"/>
        <end position="109"/>
    </location>
</feature>
<feature type="binding site" description="in other chain" evidence="1">
    <location>
        <position position="15"/>
    </location>
    <ligand>
        <name>ATP</name>
        <dbReference type="ChEBI" id="CHEBI:30616"/>
        <note>ligand shared between two neighboring subunits</note>
    </ligand>
</feature>
<feature type="binding site" evidence="1">
    <location>
        <position position="17"/>
    </location>
    <ligand>
        <name>Mg(2+)</name>
        <dbReference type="ChEBI" id="CHEBI:18420"/>
    </ligand>
</feature>
<feature type="binding site" evidence="1">
    <location>
        <position position="43"/>
    </location>
    <ligand>
        <name>K(+)</name>
        <dbReference type="ChEBI" id="CHEBI:29103"/>
    </ligand>
</feature>
<feature type="binding site" description="in other chain" evidence="1">
    <location>
        <position position="56"/>
    </location>
    <ligand>
        <name>L-methionine</name>
        <dbReference type="ChEBI" id="CHEBI:57844"/>
        <note>ligand shared between two neighboring subunits</note>
    </ligand>
</feature>
<feature type="binding site" description="in other chain" evidence="1">
    <location>
        <position position="99"/>
    </location>
    <ligand>
        <name>L-methionine</name>
        <dbReference type="ChEBI" id="CHEBI:57844"/>
        <note>ligand shared between two neighboring subunits</note>
    </ligand>
</feature>
<feature type="binding site" description="in other chain" evidence="1">
    <location>
        <begin position="174"/>
        <end position="176"/>
    </location>
    <ligand>
        <name>ATP</name>
        <dbReference type="ChEBI" id="CHEBI:30616"/>
        <note>ligand shared between two neighboring subunits</note>
    </ligand>
</feature>
<feature type="binding site" description="in other chain" evidence="1">
    <location>
        <begin position="244"/>
        <end position="245"/>
    </location>
    <ligand>
        <name>ATP</name>
        <dbReference type="ChEBI" id="CHEBI:30616"/>
        <note>ligand shared between two neighboring subunits</note>
    </ligand>
</feature>
<feature type="binding site" evidence="1">
    <location>
        <position position="253"/>
    </location>
    <ligand>
        <name>ATP</name>
        <dbReference type="ChEBI" id="CHEBI:30616"/>
        <note>ligand shared between two neighboring subunits</note>
    </ligand>
</feature>
<feature type="binding site" evidence="1">
    <location>
        <position position="253"/>
    </location>
    <ligand>
        <name>L-methionine</name>
        <dbReference type="ChEBI" id="CHEBI:57844"/>
        <note>ligand shared between two neighboring subunits</note>
    </ligand>
</feature>
<feature type="binding site" description="in other chain" evidence="1">
    <location>
        <begin position="259"/>
        <end position="260"/>
    </location>
    <ligand>
        <name>ATP</name>
        <dbReference type="ChEBI" id="CHEBI:30616"/>
        <note>ligand shared between two neighboring subunits</note>
    </ligand>
</feature>
<feature type="binding site" evidence="1">
    <location>
        <position position="276"/>
    </location>
    <ligand>
        <name>ATP</name>
        <dbReference type="ChEBI" id="CHEBI:30616"/>
        <note>ligand shared between two neighboring subunits</note>
    </ligand>
</feature>
<feature type="binding site" evidence="1">
    <location>
        <position position="280"/>
    </location>
    <ligand>
        <name>ATP</name>
        <dbReference type="ChEBI" id="CHEBI:30616"/>
        <note>ligand shared between two neighboring subunits</note>
    </ligand>
</feature>
<feature type="binding site" description="in other chain" evidence="1">
    <location>
        <position position="284"/>
    </location>
    <ligand>
        <name>L-methionine</name>
        <dbReference type="ChEBI" id="CHEBI:57844"/>
        <note>ligand shared between two neighboring subunits</note>
    </ligand>
</feature>
<dbReference type="EC" id="2.5.1.6" evidence="1"/>
<dbReference type="EMBL" id="CP000850">
    <property type="protein sequence ID" value="ABV97742.1"/>
    <property type="molecule type" value="Genomic_DNA"/>
</dbReference>
<dbReference type="SMR" id="A8LY25"/>
<dbReference type="STRING" id="391037.Sare_1857"/>
<dbReference type="KEGG" id="saq:Sare_1857"/>
<dbReference type="PATRIC" id="fig|391037.6.peg.1885"/>
<dbReference type="eggNOG" id="COG0192">
    <property type="taxonomic scope" value="Bacteria"/>
</dbReference>
<dbReference type="HOGENOM" id="CLU_041802_1_1_11"/>
<dbReference type="OrthoDB" id="9801686at2"/>
<dbReference type="UniPathway" id="UPA00315">
    <property type="reaction ID" value="UER00080"/>
</dbReference>
<dbReference type="GO" id="GO:0005737">
    <property type="term" value="C:cytoplasm"/>
    <property type="evidence" value="ECO:0007669"/>
    <property type="project" value="UniProtKB-SubCell"/>
</dbReference>
<dbReference type="GO" id="GO:0005524">
    <property type="term" value="F:ATP binding"/>
    <property type="evidence" value="ECO:0007669"/>
    <property type="project" value="UniProtKB-UniRule"/>
</dbReference>
<dbReference type="GO" id="GO:0000287">
    <property type="term" value="F:magnesium ion binding"/>
    <property type="evidence" value="ECO:0007669"/>
    <property type="project" value="UniProtKB-UniRule"/>
</dbReference>
<dbReference type="GO" id="GO:0004478">
    <property type="term" value="F:methionine adenosyltransferase activity"/>
    <property type="evidence" value="ECO:0007669"/>
    <property type="project" value="UniProtKB-UniRule"/>
</dbReference>
<dbReference type="GO" id="GO:0006730">
    <property type="term" value="P:one-carbon metabolic process"/>
    <property type="evidence" value="ECO:0007669"/>
    <property type="project" value="UniProtKB-KW"/>
</dbReference>
<dbReference type="GO" id="GO:0006556">
    <property type="term" value="P:S-adenosylmethionine biosynthetic process"/>
    <property type="evidence" value="ECO:0007669"/>
    <property type="project" value="UniProtKB-UniRule"/>
</dbReference>
<dbReference type="CDD" id="cd18079">
    <property type="entry name" value="S-AdoMet_synt"/>
    <property type="match status" value="1"/>
</dbReference>
<dbReference type="FunFam" id="3.30.300.10:FF:000006">
    <property type="entry name" value="S-adenosylmethionine synthase"/>
    <property type="match status" value="1"/>
</dbReference>
<dbReference type="Gene3D" id="3.30.300.10">
    <property type="match status" value="3"/>
</dbReference>
<dbReference type="HAMAP" id="MF_00086">
    <property type="entry name" value="S_AdoMet_synth1"/>
    <property type="match status" value="1"/>
</dbReference>
<dbReference type="InterPro" id="IPR022631">
    <property type="entry name" value="ADOMET_SYNTHASE_CS"/>
</dbReference>
<dbReference type="InterPro" id="IPR022630">
    <property type="entry name" value="S-AdoMet_synt_C"/>
</dbReference>
<dbReference type="InterPro" id="IPR022629">
    <property type="entry name" value="S-AdoMet_synt_central"/>
</dbReference>
<dbReference type="InterPro" id="IPR022628">
    <property type="entry name" value="S-AdoMet_synt_N"/>
</dbReference>
<dbReference type="InterPro" id="IPR002133">
    <property type="entry name" value="S-AdoMet_synthetase"/>
</dbReference>
<dbReference type="InterPro" id="IPR022636">
    <property type="entry name" value="S-AdoMet_synthetase_sfam"/>
</dbReference>
<dbReference type="NCBIfam" id="TIGR01034">
    <property type="entry name" value="metK"/>
    <property type="match status" value="1"/>
</dbReference>
<dbReference type="PANTHER" id="PTHR11964">
    <property type="entry name" value="S-ADENOSYLMETHIONINE SYNTHETASE"/>
    <property type="match status" value="1"/>
</dbReference>
<dbReference type="Pfam" id="PF02773">
    <property type="entry name" value="S-AdoMet_synt_C"/>
    <property type="match status" value="1"/>
</dbReference>
<dbReference type="Pfam" id="PF02772">
    <property type="entry name" value="S-AdoMet_synt_M"/>
    <property type="match status" value="1"/>
</dbReference>
<dbReference type="Pfam" id="PF00438">
    <property type="entry name" value="S-AdoMet_synt_N"/>
    <property type="match status" value="1"/>
</dbReference>
<dbReference type="PIRSF" id="PIRSF000497">
    <property type="entry name" value="MAT"/>
    <property type="match status" value="1"/>
</dbReference>
<dbReference type="SUPFAM" id="SSF55973">
    <property type="entry name" value="S-adenosylmethionine synthetase"/>
    <property type="match status" value="3"/>
</dbReference>
<dbReference type="PROSITE" id="PS00376">
    <property type="entry name" value="ADOMET_SYNTHASE_1"/>
    <property type="match status" value="1"/>
</dbReference>
<dbReference type="PROSITE" id="PS00377">
    <property type="entry name" value="ADOMET_SYNTHASE_2"/>
    <property type="match status" value="1"/>
</dbReference>
<protein>
    <recommendedName>
        <fullName evidence="1">S-adenosylmethionine synthase</fullName>
        <shortName evidence="1">AdoMet synthase</shortName>
        <ecNumber evidence="1">2.5.1.6</ecNumber>
    </recommendedName>
    <alternativeName>
        <fullName evidence="1">MAT</fullName>
    </alternativeName>
    <alternativeName>
        <fullName evidence="1">Methionine adenosyltransferase</fullName>
    </alternativeName>
</protein>
<proteinExistence type="inferred from homology"/>
<reference key="1">
    <citation type="submission" date="2007-10" db="EMBL/GenBank/DDBJ databases">
        <title>Complete sequence of Salinispora arenicola CNS-205.</title>
        <authorList>
            <consortium name="US DOE Joint Genome Institute"/>
            <person name="Copeland A."/>
            <person name="Lucas S."/>
            <person name="Lapidus A."/>
            <person name="Barry K."/>
            <person name="Glavina del Rio T."/>
            <person name="Dalin E."/>
            <person name="Tice H."/>
            <person name="Pitluck S."/>
            <person name="Foster B."/>
            <person name="Schmutz J."/>
            <person name="Larimer F."/>
            <person name="Land M."/>
            <person name="Hauser L."/>
            <person name="Kyrpides N."/>
            <person name="Ivanova N."/>
            <person name="Jensen P.R."/>
            <person name="Moore B.S."/>
            <person name="Penn K."/>
            <person name="Jenkins C."/>
            <person name="Udwary D."/>
            <person name="Xiang L."/>
            <person name="Gontang E."/>
            <person name="Richardson P."/>
        </authorList>
    </citation>
    <scope>NUCLEOTIDE SEQUENCE [LARGE SCALE GENOMIC DNA]</scope>
    <source>
        <strain>CNS-205</strain>
    </source>
</reference>
<gene>
    <name evidence="1" type="primary">metK</name>
    <name type="ordered locus">Sare_1857</name>
</gene>
<accession>A8LY25</accession>
<evidence type="ECO:0000255" key="1">
    <source>
        <dbReference type="HAMAP-Rule" id="MF_00086"/>
    </source>
</evidence>
<keyword id="KW-0067">ATP-binding</keyword>
<keyword id="KW-0963">Cytoplasm</keyword>
<keyword id="KW-0460">Magnesium</keyword>
<keyword id="KW-0479">Metal-binding</keyword>
<keyword id="KW-0547">Nucleotide-binding</keyword>
<keyword id="KW-0554">One-carbon metabolism</keyword>
<keyword id="KW-0630">Potassium</keyword>
<keyword id="KW-0808">Transferase</keyword>
<comment type="function">
    <text evidence="1">Catalyzes the formation of S-adenosylmethionine (AdoMet) from methionine and ATP. The overall synthetic reaction is composed of two sequential steps, AdoMet formation and the subsequent tripolyphosphate hydrolysis which occurs prior to release of AdoMet from the enzyme.</text>
</comment>
<comment type="catalytic activity">
    <reaction evidence="1">
        <text>L-methionine + ATP + H2O = S-adenosyl-L-methionine + phosphate + diphosphate</text>
        <dbReference type="Rhea" id="RHEA:21080"/>
        <dbReference type="ChEBI" id="CHEBI:15377"/>
        <dbReference type="ChEBI" id="CHEBI:30616"/>
        <dbReference type="ChEBI" id="CHEBI:33019"/>
        <dbReference type="ChEBI" id="CHEBI:43474"/>
        <dbReference type="ChEBI" id="CHEBI:57844"/>
        <dbReference type="ChEBI" id="CHEBI:59789"/>
        <dbReference type="EC" id="2.5.1.6"/>
    </reaction>
</comment>
<comment type="cofactor">
    <cofactor evidence="1">
        <name>Mg(2+)</name>
        <dbReference type="ChEBI" id="CHEBI:18420"/>
    </cofactor>
    <text evidence="1">Binds 2 divalent ions per subunit.</text>
</comment>
<comment type="cofactor">
    <cofactor evidence="1">
        <name>K(+)</name>
        <dbReference type="ChEBI" id="CHEBI:29103"/>
    </cofactor>
    <text evidence="1">Binds 1 potassium ion per subunit.</text>
</comment>
<comment type="pathway">
    <text evidence="1">Amino-acid biosynthesis; S-adenosyl-L-methionine biosynthesis; S-adenosyl-L-methionine from L-methionine: step 1/1.</text>
</comment>
<comment type="subunit">
    <text evidence="1">Homotetramer; dimer of dimers.</text>
</comment>
<comment type="subcellular location">
    <subcellularLocation>
        <location evidence="1">Cytoplasm</location>
    </subcellularLocation>
</comment>
<comment type="similarity">
    <text evidence="1">Belongs to the AdoMet synthase family.</text>
</comment>
<organism>
    <name type="scientific">Salinispora arenicola (strain CNS-205)</name>
    <dbReference type="NCBI Taxonomy" id="391037"/>
    <lineage>
        <taxon>Bacteria</taxon>
        <taxon>Bacillati</taxon>
        <taxon>Actinomycetota</taxon>
        <taxon>Actinomycetes</taxon>
        <taxon>Micromonosporales</taxon>
        <taxon>Micromonosporaceae</taxon>
        <taxon>Salinispora</taxon>
    </lineage>
</organism>
<sequence length="399" mass="42657">MTRRLFTSESVTEGHPDKIADQISDGILDALLAEDPRSRVAVETLITTGQVHVAGEVTTGAYADIPAIVRRTILDIGYDSSRKGFDGASCGVSVSIGSQSADIAQGVDNAFELRTGASESALDAQGAGDQGMMFGFACSETPELMPMPIALAHRLSRRLAQVRREGVVPYLRPDGKTQVTVEYEGLRPVRLNTVLVSSQHAADVSLDSLLTPDIRDHVIAPEVEGLGLGLDVEDYRLLVNPTGRFEVGGPMGDAGLTGRKIIVDTYGGYARHGGGAFSGKDPSKVDRSAAYAMRWVAKNVVAAGLAERCEAQVAYAIGKAHPVSLFVETFGTETVPVERIEKAVTEVFDLRPAAIIRDLQLLRPIYSQTAAYGHFGRELPDFTWESTDRAADLKSVAGA</sequence>
<name>METK_SALAI</name>